<reference key="1">
    <citation type="journal article" date="2009" name="PLoS ONE">
        <title>Non mycobacterial virulence genes in the genome of the emerging pathogen Mycobacterium abscessus.</title>
        <authorList>
            <person name="Ripoll F."/>
            <person name="Pasek S."/>
            <person name="Schenowitz C."/>
            <person name="Dossat C."/>
            <person name="Barbe V."/>
            <person name="Rottman M."/>
            <person name="Macheras E."/>
            <person name="Heym B."/>
            <person name="Herrmann J.L."/>
            <person name="Daffe M."/>
            <person name="Brosch R."/>
            <person name="Risler J.L."/>
            <person name="Gaillard J.L."/>
        </authorList>
    </citation>
    <scope>NUCLEOTIDE SEQUENCE [LARGE SCALE GENOMIC DNA]</scope>
    <source>
        <strain>ATCC 19977 / DSM 44196 / CCUG 20993 / CIP 104536 / JCM 13569 / NCTC 13031 / TMC 1543 / L948</strain>
    </source>
</reference>
<gene>
    <name evidence="1" type="primary">adk</name>
    <name type="ordered locus">MAB_3783c</name>
</gene>
<comment type="function">
    <text evidence="1">Catalyzes the reversible transfer of the terminal phosphate group between ATP and AMP. Plays an important role in cellular energy homeostasis and in adenine nucleotide metabolism.</text>
</comment>
<comment type="catalytic activity">
    <reaction evidence="1">
        <text>AMP + ATP = 2 ADP</text>
        <dbReference type="Rhea" id="RHEA:12973"/>
        <dbReference type="ChEBI" id="CHEBI:30616"/>
        <dbReference type="ChEBI" id="CHEBI:456215"/>
        <dbReference type="ChEBI" id="CHEBI:456216"/>
        <dbReference type="EC" id="2.7.4.3"/>
    </reaction>
</comment>
<comment type="pathway">
    <text evidence="1">Purine metabolism; AMP biosynthesis via salvage pathway; AMP from ADP: step 1/1.</text>
</comment>
<comment type="subunit">
    <text evidence="1">Monomer.</text>
</comment>
<comment type="subcellular location">
    <subcellularLocation>
        <location evidence="1">Cytoplasm</location>
    </subcellularLocation>
</comment>
<comment type="domain">
    <text evidence="1">Consists of three domains, a large central CORE domain and two small peripheral domains, NMPbind and LID, which undergo movements during catalysis. The LID domain closes over the site of phosphoryl transfer upon ATP binding. Assembling and dissambling the active center during each catalytic cycle provides an effective means to prevent ATP hydrolysis.</text>
</comment>
<comment type="similarity">
    <text evidence="1">Belongs to the adenylate kinase family.</text>
</comment>
<sequence>MRVVLLGPPGAGKGTQAQLISEKFGIPQISTGDLFRSNISEGTELGLQAKQYLDAGDLVPSEVTNKMVEARLDEPDAAAGFILDGFPRTVDQADALAAMEEARGVTIDAVLEFRVPVEELVQRLLGRGRADDTEDIIRNRLNVYRDETAPLLEYYQNVLQTIDAVGTVDEVFARTSQALGR</sequence>
<protein>
    <recommendedName>
        <fullName evidence="1">Adenylate kinase</fullName>
        <shortName evidence="1">AK</shortName>
        <ecNumber evidence="1">2.7.4.3</ecNumber>
    </recommendedName>
    <alternativeName>
        <fullName evidence="1">ATP-AMP transphosphorylase</fullName>
    </alternativeName>
    <alternativeName>
        <fullName evidence="1">ATP:AMP phosphotransferase</fullName>
    </alternativeName>
    <alternativeName>
        <fullName evidence="1">Adenylate monophosphate kinase</fullName>
    </alternativeName>
</protein>
<feature type="chain" id="PRO_1000100585" description="Adenylate kinase">
    <location>
        <begin position="1"/>
        <end position="181"/>
    </location>
</feature>
<feature type="region of interest" description="NMP" evidence="1">
    <location>
        <begin position="30"/>
        <end position="59"/>
    </location>
</feature>
<feature type="region of interest" description="LID" evidence="1">
    <location>
        <begin position="126"/>
        <end position="132"/>
    </location>
</feature>
<feature type="binding site" evidence="1">
    <location>
        <begin position="10"/>
        <end position="15"/>
    </location>
    <ligand>
        <name>ATP</name>
        <dbReference type="ChEBI" id="CHEBI:30616"/>
    </ligand>
</feature>
<feature type="binding site" evidence="1">
    <location>
        <position position="31"/>
    </location>
    <ligand>
        <name>AMP</name>
        <dbReference type="ChEBI" id="CHEBI:456215"/>
    </ligand>
</feature>
<feature type="binding site" evidence="1">
    <location>
        <position position="36"/>
    </location>
    <ligand>
        <name>AMP</name>
        <dbReference type="ChEBI" id="CHEBI:456215"/>
    </ligand>
</feature>
<feature type="binding site" evidence="1">
    <location>
        <begin position="57"/>
        <end position="59"/>
    </location>
    <ligand>
        <name>AMP</name>
        <dbReference type="ChEBI" id="CHEBI:456215"/>
    </ligand>
</feature>
<feature type="binding site" evidence="1">
    <location>
        <begin position="85"/>
        <end position="88"/>
    </location>
    <ligand>
        <name>AMP</name>
        <dbReference type="ChEBI" id="CHEBI:456215"/>
    </ligand>
</feature>
<feature type="binding site" evidence="1">
    <location>
        <position position="92"/>
    </location>
    <ligand>
        <name>AMP</name>
        <dbReference type="ChEBI" id="CHEBI:456215"/>
    </ligand>
</feature>
<feature type="binding site" evidence="1">
    <location>
        <position position="127"/>
    </location>
    <ligand>
        <name>ATP</name>
        <dbReference type="ChEBI" id="CHEBI:30616"/>
    </ligand>
</feature>
<feature type="binding site" evidence="1">
    <location>
        <position position="129"/>
    </location>
    <ligand>
        <name>AMP</name>
        <dbReference type="ChEBI" id="CHEBI:456215"/>
    </ligand>
</feature>
<feature type="binding site" evidence="1">
    <location>
        <position position="140"/>
    </location>
    <ligand>
        <name>AMP</name>
        <dbReference type="ChEBI" id="CHEBI:456215"/>
    </ligand>
</feature>
<feature type="binding site" evidence="1">
    <location>
        <position position="166"/>
    </location>
    <ligand>
        <name>ATP</name>
        <dbReference type="ChEBI" id="CHEBI:30616"/>
    </ligand>
</feature>
<organism>
    <name type="scientific">Mycobacteroides abscessus (strain ATCC 19977 / DSM 44196 / CCUG 20993 / CIP 104536 / JCM 13569 / NCTC 13031 / TMC 1543 / L948)</name>
    <name type="common">Mycobacterium abscessus</name>
    <dbReference type="NCBI Taxonomy" id="561007"/>
    <lineage>
        <taxon>Bacteria</taxon>
        <taxon>Bacillati</taxon>
        <taxon>Actinomycetota</taxon>
        <taxon>Actinomycetes</taxon>
        <taxon>Mycobacteriales</taxon>
        <taxon>Mycobacteriaceae</taxon>
        <taxon>Mycobacteroides</taxon>
        <taxon>Mycobacteroides abscessus</taxon>
    </lineage>
</organism>
<keyword id="KW-0067">ATP-binding</keyword>
<keyword id="KW-0963">Cytoplasm</keyword>
<keyword id="KW-0418">Kinase</keyword>
<keyword id="KW-0545">Nucleotide biosynthesis</keyword>
<keyword id="KW-0547">Nucleotide-binding</keyword>
<keyword id="KW-1185">Reference proteome</keyword>
<keyword id="KW-0808">Transferase</keyword>
<dbReference type="EC" id="2.7.4.3" evidence="1"/>
<dbReference type="EMBL" id="CU458896">
    <property type="protein sequence ID" value="CAM63858.1"/>
    <property type="molecule type" value="Genomic_DNA"/>
</dbReference>
<dbReference type="RefSeq" id="WP_005055741.1">
    <property type="nucleotide sequence ID" value="NZ_MLCG01000001.1"/>
</dbReference>
<dbReference type="SMR" id="B1MGB3"/>
<dbReference type="GeneID" id="93380723"/>
<dbReference type="KEGG" id="mab:MAB_3783c"/>
<dbReference type="UniPathway" id="UPA00588">
    <property type="reaction ID" value="UER00649"/>
</dbReference>
<dbReference type="Proteomes" id="UP000007137">
    <property type="component" value="Chromosome"/>
</dbReference>
<dbReference type="GO" id="GO:0005737">
    <property type="term" value="C:cytoplasm"/>
    <property type="evidence" value="ECO:0007669"/>
    <property type="project" value="UniProtKB-SubCell"/>
</dbReference>
<dbReference type="GO" id="GO:0004017">
    <property type="term" value="F:adenylate kinase activity"/>
    <property type="evidence" value="ECO:0007669"/>
    <property type="project" value="UniProtKB-UniRule"/>
</dbReference>
<dbReference type="GO" id="GO:0005524">
    <property type="term" value="F:ATP binding"/>
    <property type="evidence" value="ECO:0007669"/>
    <property type="project" value="UniProtKB-UniRule"/>
</dbReference>
<dbReference type="GO" id="GO:0044209">
    <property type="term" value="P:AMP salvage"/>
    <property type="evidence" value="ECO:0007669"/>
    <property type="project" value="UniProtKB-UniRule"/>
</dbReference>
<dbReference type="CDD" id="cd01428">
    <property type="entry name" value="ADK"/>
    <property type="match status" value="1"/>
</dbReference>
<dbReference type="Gene3D" id="3.40.50.300">
    <property type="entry name" value="P-loop containing nucleotide triphosphate hydrolases"/>
    <property type="match status" value="1"/>
</dbReference>
<dbReference type="HAMAP" id="MF_00235">
    <property type="entry name" value="Adenylate_kinase_Adk"/>
    <property type="match status" value="1"/>
</dbReference>
<dbReference type="InterPro" id="IPR000850">
    <property type="entry name" value="Adenylat/UMP-CMP_kin"/>
</dbReference>
<dbReference type="InterPro" id="IPR033690">
    <property type="entry name" value="Adenylat_kinase_CS"/>
</dbReference>
<dbReference type="InterPro" id="IPR027417">
    <property type="entry name" value="P-loop_NTPase"/>
</dbReference>
<dbReference type="NCBIfam" id="NF001381">
    <property type="entry name" value="PRK00279.1-3"/>
    <property type="match status" value="1"/>
</dbReference>
<dbReference type="NCBIfam" id="NF011100">
    <property type="entry name" value="PRK14527.1"/>
    <property type="match status" value="1"/>
</dbReference>
<dbReference type="NCBIfam" id="NF011101">
    <property type="entry name" value="PRK14528.1"/>
    <property type="match status" value="1"/>
</dbReference>
<dbReference type="NCBIfam" id="NF011104">
    <property type="entry name" value="PRK14531.1"/>
    <property type="match status" value="1"/>
</dbReference>
<dbReference type="NCBIfam" id="NF011105">
    <property type="entry name" value="PRK14532.1"/>
    <property type="match status" value="1"/>
</dbReference>
<dbReference type="PANTHER" id="PTHR23359">
    <property type="entry name" value="NUCLEOTIDE KINASE"/>
    <property type="match status" value="1"/>
</dbReference>
<dbReference type="Pfam" id="PF00406">
    <property type="entry name" value="ADK"/>
    <property type="match status" value="1"/>
</dbReference>
<dbReference type="PRINTS" id="PR00094">
    <property type="entry name" value="ADENYLTKNASE"/>
</dbReference>
<dbReference type="SUPFAM" id="SSF52540">
    <property type="entry name" value="P-loop containing nucleoside triphosphate hydrolases"/>
    <property type="match status" value="1"/>
</dbReference>
<dbReference type="PROSITE" id="PS00113">
    <property type="entry name" value="ADENYLATE_KINASE"/>
    <property type="match status" value="1"/>
</dbReference>
<accession>B1MGB3</accession>
<proteinExistence type="inferred from homology"/>
<evidence type="ECO:0000255" key="1">
    <source>
        <dbReference type="HAMAP-Rule" id="MF_00235"/>
    </source>
</evidence>
<name>KAD_MYCA9</name>